<evidence type="ECO:0000255" key="1">
    <source>
        <dbReference type="HAMAP-Rule" id="MF_03145"/>
    </source>
</evidence>
<name>ADE_ASPOR</name>
<keyword id="KW-0963">Cytoplasm</keyword>
<keyword id="KW-0378">Hydrolase</keyword>
<keyword id="KW-0479">Metal-binding</keyword>
<keyword id="KW-0546">Nucleotide metabolism</keyword>
<keyword id="KW-0539">Nucleus</keyword>
<keyword id="KW-1185">Reference proteome</keyword>
<keyword id="KW-0862">Zinc</keyword>
<proteinExistence type="inferred from homology"/>
<comment type="function">
    <text evidence="1">Catalyzes the hydrolytic deamination of adenine to hypoxanthine. Plays an important role in the purine salvage pathway and in nitrogen catabolism.</text>
</comment>
<comment type="catalytic activity">
    <reaction evidence="1">
        <text>adenine + H2O + H(+) = hypoxanthine + NH4(+)</text>
        <dbReference type="Rhea" id="RHEA:23688"/>
        <dbReference type="ChEBI" id="CHEBI:15377"/>
        <dbReference type="ChEBI" id="CHEBI:15378"/>
        <dbReference type="ChEBI" id="CHEBI:16708"/>
        <dbReference type="ChEBI" id="CHEBI:17368"/>
        <dbReference type="ChEBI" id="CHEBI:28938"/>
        <dbReference type="EC" id="3.5.4.2"/>
    </reaction>
</comment>
<comment type="cofactor">
    <cofactor evidence="1">
        <name>Zn(2+)</name>
        <dbReference type="ChEBI" id="CHEBI:29105"/>
    </cofactor>
    <text evidence="1">Binds 1 zinc ion per subunit.</text>
</comment>
<comment type="subcellular location">
    <subcellularLocation>
        <location evidence="1">Cytoplasm</location>
    </subcellularLocation>
    <subcellularLocation>
        <location evidence="1">Nucleus</location>
    </subcellularLocation>
</comment>
<comment type="similarity">
    <text evidence="1">Belongs to the metallo-dependent hydrolases superfamily. Adenosine and AMP deaminases family. Adenine deaminase type 2 subfamily.</text>
</comment>
<gene>
    <name type="primary">aah1</name>
    <name type="ORF">AO090011000781</name>
</gene>
<feature type="chain" id="PRO_0000256231" description="Adenine deaminase">
    <location>
        <begin position="1"/>
        <end position="351"/>
    </location>
</feature>
<feature type="active site" description="Proton donor" evidence="1">
    <location>
        <position position="211"/>
    </location>
</feature>
<feature type="binding site" evidence="1">
    <location>
        <position position="19"/>
    </location>
    <ligand>
        <name>Zn(2+)</name>
        <dbReference type="ChEBI" id="CHEBI:29105"/>
        <note>catalytic</note>
    </ligand>
</feature>
<feature type="binding site" evidence="1">
    <location>
        <position position="21"/>
    </location>
    <ligand>
        <name>Zn(2+)</name>
        <dbReference type="ChEBI" id="CHEBI:29105"/>
        <note>catalytic</note>
    </ligand>
</feature>
<feature type="binding site" evidence="1">
    <location>
        <position position="208"/>
    </location>
    <ligand>
        <name>Zn(2+)</name>
        <dbReference type="ChEBI" id="CHEBI:29105"/>
        <note>catalytic</note>
    </ligand>
</feature>
<feature type="binding site" evidence="1">
    <location>
        <position position="288"/>
    </location>
    <ligand>
        <name>Zn(2+)</name>
        <dbReference type="ChEBI" id="CHEBI:29105"/>
        <note>catalytic</note>
    </ligand>
</feature>
<feature type="binding site" evidence="1">
    <location>
        <position position="289"/>
    </location>
    <ligand>
        <name>substrate</name>
    </ligand>
</feature>
<feature type="site" description="Important for catalytic activity" evidence="1">
    <location>
        <position position="231"/>
    </location>
</feature>
<dbReference type="EC" id="3.5.4.2" evidence="1"/>
<dbReference type="EMBL" id="BA000055">
    <property type="protein sequence ID" value="BAE65226.1"/>
    <property type="molecule type" value="Genomic_DNA"/>
</dbReference>
<dbReference type="RefSeq" id="XP_001826359.1">
    <property type="nucleotide sequence ID" value="XM_001826307.1"/>
</dbReference>
<dbReference type="SMR" id="Q2TZN9"/>
<dbReference type="STRING" id="510516.Q2TZN9"/>
<dbReference type="EnsemblFungi" id="BAE65226">
    <property type="protein sequence ID" value="BAE65226"/>
    <property type="gene ID" value="AO090011000781"/>
</dbReference>
<dbReference type="GeneID" id="5998462"/>
<dbReference type="KEGG" id="aor:AO090011000781"/>
<dbReference type="VEuPathDB" id="FungiDB:AO090011000781"/>
<dbReference type="HOGENOM" id="CLU_039228_7_0_1"/>
<dbReference type="OMA" id="NHFTIHA"/>
<dbReference type="OrthoDB" id="10520at5052"/>
<dbReference type="Proteomes" id="UP000006564">
    <property type="component" value="Chromosome 7"/>
</dbReference>
<dbReference type="GO" id="GO:0005829">
    <property type="term" value="C:cytosol"/>
    <property type="evidence" value="ECO:0007669"/>
    <property type="project" value="TreeGrafter"/>
</dbReference>
<dbReference type="GO" id="GO:0005634">
    <property type="term" value="C:nucleus"/>
    <property type="evidence" value="ECO:0007669"/>
    <property type="project" value="UniProtKB-SubCell"/>
</dbReference>
<dbReference type="GO" id="GO:0000034">
    <property type="term" value="F:adenine deaminase activity"/>
    <property type="evidence" value="ECO:0007669"/>
    <property type="project" value="UniProtKB-UniRule"/>
</dbReference>
<dbReference type="GO" id="GO:0008270">
    <property type="term" value="F:zinc ion binding"/>
    <property type="evidence" value="ECO:0007669"/>
    <property type="project" value="UniProtKB-UniRule"/>
</dbReference>
<dbReference type="GO" id="GO:0006146">
    <property type="term" value="P:adenine catabolic process"/>
    <property type="evidence" value="ECO:0007669"/>
    <property type="project" value="UniProtKB-UniRule"/>
</dbReference>
<dbReference type="GO" id="GO:0043103">
    <property type="term" value="P:hypoxanthine salvage"/>
    <property type="evidence" value="ECO:0007669"/>
    <property type="project" value="UniProtKB-UniRule"/>
</dbReference>
<dbReference type="GO" id="GO:0009117">
    <property type="term" value="P:nucleotide metabolic process"/>
    <property type="evidence" value="ECO:0007669"/>
    <property type="project" value="UniProtKB-KW"/>
</dbReference>
<dbReference type="GO" id="GO:0009168">
    <property type="term" value="P:purine ribonucleoside monophosphate biosynthetic process"/>
    <property type="evidence" value="ECO:0007669"/>
    <property type="project" value="InterPro"/>
</dbReference>
<dbReference type="CDD" id="cd01320">
    <property type="entry name" value="ADA"/>
    <property type="match status" value="1"/>
</dbReference>
<dbReference type="FunFam" id="3.20.20.140:FF:000039">
    <property type="entry name" value="Adenine deaminase"/>
    <property type="match status" value="1"/>
</dbReference>
<dbReference type="Gene3D" id="3.20.20.140">
    <property type="entry name" value="Metal-dependent hydrolases"/>
    <property type="match status" value="1"/>
</dbReference>
<dbReference type="HAMAP" id="MF_01962">
    <property type="entry name" value="Adenine_deaminase"/>
    <property type="match status" value="1"/>
</dbReference>
<dbReference type="InterPro" id="IPR006650">
    <property type="entry name" value="A/AMP_deam_AS"/>
</dbReference>
<dbReference type="InterPro" id="IPR001365">
    <property type="entry name" value="A_deaminase_dom"/>
</dbReference>
<dbReference type="InterPro" id="IPR028892">
    <property type="entry name" value="ADE"/>
</dbReference>
<dbReference type="InterPro" id="IPR006330">
    <property type="entry name" value="Ado/ade_deaminase"/>
</dbReference>
<dbReference type="InterPro" id="IPR032466">
    <property type="entry name" value="Metal_Hydrolase"/>
</dbReference>
<dbReference type="NCBIfam" id="TIGR01430">
    <property type="entry name" value="aden_deam"/>
    <property type="match status" value="1"/>
</dbReference>
<dbReference type="PANTHER" id="PTHR43114">
    <property type="entry name" value="ADENINE DEAMINASE"/>
    <property type="match status" value="1"/>
</dbReference>
<dbReference type="PANTHER" id="PTHR43114:SF6">
    <property type="entry name" value="ADENINE DEAMINASE"/>
    <property type="match status" value="1"/>
</dbReference>
<dbReference type="Pfam" id="PF00962">
    <property type="entry name" value="A_deaminase"/>
    <property type="match status" value="1"/>
</dbReference>
<dbReference type="SUPFAM" id="SSF51556">
    <property type="entry name" value="Metallo-dependent hydrolases"/>
    <property type="match status" value="1"/>
</dbReference>
<dbReference type="PROSITE" id="PS00485">
    <property type="entry name" value="A_DEAMINASE"/>
    <property type="match status" value="1"/>
</dbReference>
<organism>
    <name type="scientific">Aspergillus oryzae (strain ATCC 42149 / RIB 40)</name>
    <name type="common">Yellow koji mold</name>
    <dbReference type="NCBI Taxonomy" id="510516"/>
    <lineage>
        <taxon>Eukaryota</taxon>
        <taxon>Fungi</taxon>
        <taxon>Dikarya</taxon>
        <taxon>Ascomycota</taxon>
        <taxon>Pezizomycotina</taxon>
        <taxon>Eurotiomycetes</taxon>
        <taxon>Eurotiomycetidae</taxon>
        <taxon>Eurotiales</taxon>
        <taxon>Aspergillaceae</taxon>
        <taxon>Aspergillus</taxon>
        <taxon>Aspergillus subgen. Circumdati</taxon>
    </lineage>
</organism>
<accession>Q2TZN9</accession>
<protein>
    <recommendedName>
        <fullName evidence="1">Adenine deaminase</fullName>
        <shortName evidence="1">ADE</shortName>
        <ecNumber evidence="1">3.5.4.2</ecNumber>
    </recommendedName>
    <alternativeName>
        <fullName evidence="1">Adenine aminohydrolase</fullName>
        <shortName evidence="1">AAH</shortName>
    </alternativeName>
</protein>
<reference key="1">
    <citation type="journal article" date="2005" name="Nature">
        <title>Genome sequencing and analysis of Aspergillus oryzae.</title>
        <authorList>
            <person name="Machida M."/>
            <person name="Asai K."/>
            <person name="Sano M."/>
            <person name="Tanaka T."/>
            <person name="Kumagai T."/>
            <person name="Terai G."/>
            <person name="Kusumoto K."/>
            <person name="Arima T."/>
            <person name="Akita O."/>
            <person name="Kashiwagi Y."/>
            <person name="Abe K."/>
            <person name="Gomi K."/>
            <person name="Horiuchi H."/>
            <person name="Kitamoto K."/>
            <person name="Kobayashi T."/>
            <person name="Takeuchi M."/>
            <person name="Denning D.W."/>
            <person name="Galagan J.E."/>
            <person name="Nierman W.C."/>
            <person name="Yu J."/>
            <person name="Archer D.B."/>
            <person name="Bennett J.W."/>
            <person name="Bhatnagar D."/>
            <person name="Cleveland T.E."/>
            <person name="Fedorova N.D."/>
            <person name="Gotoh O."/>
            <person name="Horikawa H."/>
            <person name="Hosoyama A."/>
            <person name="Ichinomiya M."/>
            <person name="Igarashi R."/>
            <person name="Iwashita K."/>
            <person name="Juvvadi P.R."/>
            <person name="Kato M."/>
            <person name="Kato Y."/>
            <person name="Kin T."/>
            <person name="Kokubun A."/>
            <person name="Maeda H."/>
            <person name="Maeyama N."/>
            <person name="Maruyama J."/>
            <person name="Nagasaki H."/>
            <person name="Nakajima T."/>
            <person name="Oda K."/>
            <person name="Okada K."/>
            <person name="Paulsen I."/>
            <person name="Sakamoto K."/>
            <person name="Sawano T."/>
            <person name="Takahashi M."/>
            <person name="Takase K."/>
            <person name="Terabayashi Y."/>
            <person name="Wortman J.R."/>
            <person name="Yamada O."/>
            <person name="Yamagata Y."/>
            <person name="Anazawa H."/>
            <person name="Hata Y."/>
            <person name="Koide Y."/>
            <person name="Komori T."/>
            <person name="Koyama Y."/>
            <person name="Minetoki T."/>
            <person name="Suharnan S."/>
            <person name="Tanaka A."/>
            <person name="Isono K."/>
            <person name="Kuhara S."/>
            <person name="Ogasawara N."/>
            <person name="Kikuchi H."/>
        </authorList>
    </citation>
    <scope>NUCLEOTIDE SEQUENCE [LARGE SCALE GENOMIC DNA]</scope>
    <source>
        <strain>ATCC 42149 / RIB 40</strain>
    </source>
</reference>
<sequence length="351" mass="39718">MCKSDLHDFLHGLPKCEHHVHLEGCLAPDLIFELAKRNNVSLPNEPAYESIEALSHRYGHFTSLDDFLRFYFIGMSVLHHESDFADLAWAYFQKAHADGVHHAEVFFDPQVHRDRGIPYETIVSGFVAGCQRAERELGLTTRLILCFVRHLPVDNAARVYQEALDQEHFDNEVVHGLGWSSTEVGPPKDMFRELYSSASAKGIRLTAHAGEEGDPSYISAALELGAQRIDHGIRLVEDPVLMEKVVRDRIMLTVCPISNLQLRCVESIAHVPIRKFLDAGVMFSINSDDPAYFGGYILDNYCAVQEAFQLTVDEWRVIAENSIKGSWIGEERKTELLKRIDDHVQRHVAAV</sequence>